<organism>
    <name type="scientific">Phytophthora infestans (strain T30-4)</name>
    <name type="common">Potato late blight agent</name>
    <dbReference type="NCBI Taxonomy" id="403677"/>
    <lineage>
        <taxon>Eukaryota</taxon>
        <taxon>Sar</taxon>
        <taxon>Stramenopiles</taxon>
        <taxon>Oomycota</taxon>
        <taxon>Peronosporales</taxon>
        <taxon>Peronosporaceae</taxon>
        <taxon>Phytophthora</taxon>
    </lineage>
</organism>
<comment type="function">
    <text evidence="4">Effector that enhances P.infestans colonization of Nicotiana benthamiana leaves.</text>
</comment>
<comment type="subcellular location">
    <subcellularLocation>
        <location evidence="4">Secreted</location>
    </subcellularLocation>
    <subcellularLocation>
        <location evidence="4">Host nucleus</location>
    </subcellularLocation>
    <subcellularLocation>
        <location evidence="4">Host cytoplasm</location>
    </subcellularLocation>
</comment>
<comment type="induction">
    <text evidence="3">Expression is induced during host plant infection.</text>
</comment>
<comment type="domain">
    <text evidence="7">The RxLR-dEER motif acts to carry the protein into the host cell cytoplasm through binding to cell surface phosphatidylinositol-3-phosphate.</text>
</comment>
<comment type="similarity">
    <text evidence="6">Belongs to the RxLR effector family.</text>
</comment>
<proteinExistence type="evidence at transcript level"/>
<accession>D0NIY2</accession>
<sequence length="96" mass="10127">MRLSFIIVAVSLLAGGSGAAGAAYPASDVLTSRGTNEGARTGKRSLRYDSNVERTGEEDDEIKFLPDAEKLAQLAKLAHTNKADSLGTSLKNFLSN</sequence>
<protein>
    <recommendedName>
        <fullName evidence="5">RxLR effector protein PITG_11507</fullName>
    </recommendedName>
</protein>
<dbReference type="EMBL" id="DS028140">
    <property type="protein sequence ID" value="EEY59466.1"/>
    <property type="molecule type" value="Genomic_DNA"/>
</dbReference>
<dbReference type="RefSeq" id="XP_002901076.1">
    <property type="nucleotide sequence ID" value="XM_002901030.1"/>
</dbReference>
<dbReference type="EnsemblProtists" id="PITG_11507T0">
    <property type="protein sequence ID" value="PITG_11507T0"/>
    <property type="gene ID" value="PITG_11507"/>
</dbReference>
<dbReference type="GeneID" id="9470591"/>
<dbReference type="KEGG" id="pif:PITG_11507"/>
<dbReference type="VEuPathDB" id="FungiDB:PITG_11507"/>
<dbReference type="eggNOG" id="ENOG502RGK4">
    <property type="taxonomic scope" value="Eukaryota"/>
</dbReference>
<dbReference type="HOGENOM" id="CLU_140782_0_0_1"/>
<dbReference type="InParanoid" id="D0NIY2"/>
<dbReference type="Proteomes" id="UP000006643">
    <property type="component" value="Partially assembled WGS sequence"/>
</dbReference>
<dbReference type="GO" id="GO:0005576">
    <property type="term" value="C:extracellular region"/>
    <property type="evidence" value="ECO:0007669"/>
    <property type="project" value="UniProtKB-SubCell"/>
</dbReference>
<dbReference type="GO" id="GO:0030430">
    <property type="term" value="C:host cell cytoplasm"/>
    <property type="evidence" value="ECO:0007669"/>
    <property type="project" value="UniProtKB-SubCell"/>
</dbReference>
<dbReference type="GO" id="GO:0042025">
    <property type="term" value="C:host cell nucleus"/>
    <property type="evidence" value="ECO:0007669"/>
    <property type="project" value="UniProtKB-SubCell"/>
</dbReference>
<keyword id="KW-1035">Host cytoplasm</keyword>
<keyword id="KW-1048">Host nucleus</keyword>
<keyword id="KW-1185">Reference proteome</keyword>
<keyword id="KW-0964">Secreted</keyword>
<keyword id="KW-0732">Signal</keyword>
<keyword id="KW-0843">Virulence</keyword>
<feature type="signal peptide" evidence="1">
    <location>
        <begin position="1"/>
        <end position="19"/>
    </location>
</feature>
<feature type="chain" id="PRO_5003013416" description="RxLR effector protein PITG_11507">
    <location>
        <begin position="20"/>
        <end position="96"/>
    </location>
</feature>
<feature type="region of interest" description="Disordered" evidence="2">
    <location>
        <begin position="27"/>
        <end position="59"/>
    </location>
</feature>
<feature type="short sequence motif" description="RxLR-dEER" evidence="7">
    <location>
        <begin position="44"/>
        <end position="59"/>
    </location>
</feature>
<feature type="compositionally biased region" description="Basic and acidic residues" evidence="2">
    <location>
        <begin position="46"/>
        <end position="55"/>
    </location>
</feature>
<name>RXLRJ_PHYIT</name>
<gene>
    <name type="ORF">PITG_11507</name>
</gene>
<reference key="1">
    <citation type="journal article" date="2009" name="Nature">
        <title>Genome sequence and analysis of the Irish potato famine pathogen Phytophthora infestans.</title>
        <authorList>
            <consortium name="The Broad Institute Genome Sequencing Platform"/>
            <person name="Haas B.J."/>
            <person name="Kamoun S."/>
            <person name="Zody M.C."/>
            <person name="Jiang R.H."/>
            <person name="Handsaker R.E."/>
            <person name="Cano L.M."/>
            <person name="Grabherr M."/>
            <person name="Kodira C.D."/>
            <person name="Raffaele S."/>
            <person name="Torto-Alalibo T."/>
            <person name="Bozkurt T.O."/>
            <person name="Ah-Fong A.M."/>
            <person name="Alvarado L."/>
            <person name="Anderson V.L."/>
            <person name="Armstrong M.R."/>
            <person name="Avrova A."/>
            <person name="Baxter L."/>
            <person name="Beynon J."/>
            <person name="Boevink P.C."/>
            <person name="Bollmann S.R."/>
            <person name="Bos J.I."/>
            <person name="Bulone V."/>
            <person name="Cai G."/>
            <person name="Cakir C."/>
            <person name="Carrington J.C."/>
            <person name="Chawner M."/>
            <person name="Conti L."/>
            <person name="Costanzo S."/>
            <person name="Ewan R."/>
            <person name="Fahlgren N."/>
            <person name="Fischbach M.A."/>
            <person name="Fugelstad J."/>
            <person name="Gilroy E.M."/>
            <person name="Gnerre S."/>
            <person name="Green P.J."/>
            <person name="Grenville-Briggs L.J."/>
            <person name="Griffith J."/>
            <person name="Grunwald N.J."/>
            <person name="Horn K."/>
            <person name="Horner N.R."/>
            <person name="Hu C.H."/>
            <person name="Huitema E."/>
            <person name="Jeong D.H."/>
            <person name="Jones A.M."/>
            <person name="Jones J.D."/>
            <person name="Jones R.W."/>
            <person name="Karlsson E.K."/>
            <person name="Kunjeti S.G."/>
            <person name="Lamour K."/>
            <person name="Liu Z."/>
            <person name="Ma L."/>
            <person name="Maclean D."/>
            <person name="Chibucos M.C."/>
            <person name="McDonald H."/>
            <person name="McWalters J."/>
            <person name="Meijer H.J."/>
            <person name="Morgan W."/>
            <person name="Morris P.F."/>
            <person name="Munro C.A."/>
            <person name="O'Neill K."/>
            <person name="Ospina-Giraldo M."/>
            <person name="Pinzon A."/>
            <person name="Pritchard L."/>
            <person name="Ramsahoye B."/>
            <person name="Ren Q."/>
            <person name="Restrepo S."/>
            <person name="Roy S."/>
            <person name="Sadanandom A."/>
            <person name="Savidor A."/>
            <person name="Schornack S."/>
            <person name="Schwartz D.C."/>
            <person name="Schumann U.D."/>
            <person name="Schwessinger B."/>
            <person name="Seyer L."/>
            <person name="Sharpe T."/>
            <person name="Silvar C."/>
            <person name="Song J."/>
            <person name="Studholme D.J."/>
            <person name="Sykes S."/>
            <person name="Thines M."/>
            <person name="van de Vondervoort P.J."/>
            <person name="Phuntumart V."/>
            <person name="Wawra S."/>
            <person name="Weide R."/>
            <person name="Win J."/>
            <person name="Young C."/>
            <person name="Zhou S."/>
            <person name="Fry W."/>
            <person name="Meyers B.C."/>
            <person name="van West P."/>
            <person name="Ristaino J."/>
            <person name="Govers F."/>
            <person name="Birch P.R."/>
            <person name="Whisson S.C."/>
            <person name="Judelson H.S."/>
            <person name="Nusbaum C."/>
        </authorList>
    </citation>
    <scope>NUCLEOTIDE SEQUENCE [LARGE SCALE GENOMIC DNA]</scope>
    <scope>INDUCTION</scope>
    <source>
        <strain>T30-4</strain>
    </source>
</reference>
<reference key="2">
    <citation type="journal article" date="2019" name="J. Exp. Bot.">
        <title>Phytophthora infestans RXLR effectors act in concert at diverse subcellular locations to enhance host colonization.</title>
        <authorList>
            <person name="Wang S."/>
            <person name="McLellan H."/>
            <person name="Bukharova T."/>
            <person name="He Q."/>
            <person name="Murphy F."/>
            <person name="Shi J."/>
            <person name="Sun S."/>
            <person name="van Weymers P."/>
            <person name="Ren Y."/>
            <person name="Thilliez G."/>
            <person name="Wang H."/>
            <person name="Chen X."/>
            <person name="Engelhardt S."/>
            <person name="Vleeshouwers V."/>
            <person name="Gilroy E.M."/>
            <person name="Whisson S.C."/>
            <person name="Hein I."/>
            <person name="Wang X."/>
            <person name="Tian Z."/>
            <person name="Birch P.R.J."/>
            <person name="Boevink P.C."/>
        </authorList>
    </citation>
    <scope>FUNCTION</scope>
    <scope>SUBCELLULAR LOCATION</scope>
    <scope>DOMAIN</scope>
</reference>
<evidence type="ECO:0000255" key="1"/>
<evidence type="ECO:0000256" key="2">
    <source>
        <dbReference type="SAM" id="MobiDB-lite"/>
    </source>
</evidence>
<evidence type="ECO:0000269" key="3">
    <source>
    </source>
</evidence>
<evidence type="ECO:0000269" key="4">
    <source>
    </source>
</evidence>
<evidence type="ECO:0000303" key="5">
    <source>
    </source>
</evidence>
<evidence type="ECO:0000305" key="6"/>
<evidence type="ECO:0000305" key="7">
    <source>
    </source>
</evidence>